<sequence>MSTAPSPGTTPSPSPPSPPTNSTTTTPPPAASSPPPTTTPSSPPPSPSTNSTSPPPSSPLPPSLPPPSPPGSLTPPLPQPSPSAPITPSPPSPTTPSNPRSPPSPNQGPPNTPSGSTPRTPSNTKPSPPSDSSDGLSTGVVVGIAIGGVAILVILTLICLLCKKKRRRRHDDEAAYYVPPPPPSGPKAGGPYGGQQQYWQQQNASRPSDNHVVTSLPPPKPPSPPRKPPPPPPPPAFMSSSGGSDYSDLPVLPPPSPGLVLGFSKSTFTYEELSRATNGFSEANLLGQGGFGYVHKGILPSGKEVAVKQLKAGSGQGEREFQAEVEIISRVHHRHLVSLIGYCMAGVQRLLVYEFVPNNNLEFHLHGKGRPTMEWSTRLKIALGSAKGLSYLHEDCNPKIIHRDIKASNILIDFKFEAKVADFGLAKIASDTNTHVSTRVMGTFGYLAPEYAASGKLTEKSDVFSFGVVLLELITGRRPVDANNVYVDDSLVDWARPLLNRASEEGDFEGLADSKMGNEYDREEMARMVACAAACVRHSARRRPRMSQIVRALEGNVSLSDLNEGMRPGHSNVYSSYGGSTDYDTSQYNDDMIKFRKMALGTQEYGTTGEYSNPTSDYGLYPSGSSSEGQATREMEMGKIKKTGQGYSGPSL</sequence>
<protein>
    <recommendedName>
        <fullName>Proline-rich receptor-like protein kinase PERK1</fullName>
        <ecNumber>2.7.11.1</ecNumber>
    </recommendedName>
    <alternativeName>
        <fullName>Proline-rich extensin-like receptor kinase 1</fullName>
        <shortName>AtPERK1</shortName>
    </alternativeName>
</protein>
<accession>Q9LV48</accession>
<accession>C0Z3E1</accession>
<accession>Q6QJ27</accession>
<accession>Q6QJ28</accession>
<accession>Q94JZ6</accession>
<name>PERK1_ARATH</name>
<keyword id="KW-0025">Alternative splicing</keyword>
<keyword id="KW-0067">ATP-binding</keyword>
<keyword id="KW-1003">Cell membrane</keyword>
<keyword id="KW-0325">Glycoprotein</keyword>
<keyword id="KW-0418">Kinase</keyword>
<keyword id="KW-0472">Membrane</keyword>
<keyword id="KW-0547">Nucleotide-binding</keyword>
<keyword id="KW-0597">Phosphoprotein</keyword>
<keyword id="KW-1185">Reference proteome</keyword>
<keyword id="KW-0723">Serine/threonine-protein kinase</keyword>
<keyword id="KW-0808">Transferase</keyword>
<keyword id="KW-0812">Transmembrane</keyword>
<keyword id="KW-1133">Transmembrane helix</keyword>
<dbReference type="EC" id="2.7.11.1"/>
<dbReference type="EMBL" id="AB020746">
    <property type="protein sequence ID" value="BAB02007.1"/>
    <property type="molecule type" value="Genomic_DNA"/>
</dbReference>
<dbReference type="EMBL" id="CP002686">
    <property type="protein sequence ID" value="AEE76920.1"/>
    <property type="molecule type" value="Genomic_DNA"/>
</dbReference>
<dbReference type="EMBL" id="AF370509">
    <property type="protein sequence ID" value="AAK43886.1"/>
    <property type="molecule type" value="mRNA"/>
</dbReference>
<dbReference type="EMBL" id="AY056788">
    <property type="protein sequence ID" value="AAL10479.1"/>
    <property type="molecule type" value="mRNA"/>
</dbReference>
<dbReference type="EMBL" id="AY059901">
    <property type="protein sequence ID" value="AAL24383.1"/>
    <property type="molecule type" value="mRNA"/>
</dbReference>
<dbReference type="EMBL" id="AY093065">
    <property type="protein sequence ID" value="AAM13064.1"/>
    <property type="molecule type" value="mRNA"/>
</dbReference>
<dbReference type="EMBL" id="AY128792">
    <property type="protein sequence ID" value="AAM91192.1"/>
    <property type="molecule type" value="mRNA"/>
</dbReference>
<dbReference type="EMBL" id="BT008400">
    <property type="protein sequence ID" value="AAP37759.1"/>
    <property type="molecule type" value="mRNA"/>
</dbReference>
<dbReference type="EMBL" id="BT008409">
    <property type="protein sequence ID" value="AAP37768.1"/>
    <property type="molecule type" value="mRNA"/>
</dbReference>
<dbReference type="EMBL" id="AK319105">
    <property type="protein sequence ID" value="BAH57220.1"/>
    <property type="molecule type" value="mRNA"/>
</dbReference>
<dbReference type="EMBL" id="AY536855">
    <property type="protein sequence ID" value="AAS65793.1"/>
    <property type="molecule type" value="mRNA"/>
</dbReference>
<dbReference type="EMBL" id="AY536856">
    <property type="protein sequence ID" value="AAS65794.1"/>
    <property type="molecule type" value="mRNA"/>
</dbReference>
<dbReference type="RefSeq" id="NP_189098.1">
    <molecule id="Q9LV48-1"/>
    <property type="nucleotide sequence ID" value="NM_113366.3"/>
</dbReference>
<dbReference type="SMR" id="Q9LV48"/>
<dbReference type="BioGRID" id="7382">
    <property type="interactions" value="6"/>
</dbReference>
<dbReference type="FunCoup" id="Q9LV48">
    <property type="interactions" value="186"/>
</dbReference>
<dbReference type="STRING" id="3702.Q9LV48"/>
<dbReference type="GlyCosmos" id="Q9LV48">
    <property type="glycosylation" value="2 sites, No reported glycans"/>
</dbReference>
<dbReference type="GlyGen" id="Q9LV48">
    <property type="glycosylation" value="7 sites"/>
</dbReference>
<dbReference type="iPTMnet" id="Q9LV48"/>
<dbReference type="SwissPalm" id="Q9LV48"/>
<dbReference type="PaxDb" id="3702-AT3G24550.1"/>
<dbReference type="ProteomicsDB" id="236685">
    <molecule id="Q9LV48-1"/>
</dbReference>
<dbReference type="EnsemblPlants" id="AT3G24550.1">
    <molecule id="Q9LV48-1"/>
    <property type="protein sequence ID" value="AT3G24550.1"/>
    <property type="gene ID" value="AT3G24550"/>
</dbReference>
<dbReference type="GeneID" id="822051"/>
<dbReference type="Gramene" id="AT3G24550.1">
    <molecule id="Q9LV48-1"/>
    <property type="protein sequence ID" value="AT3G24550.1"/>
    <property type="gene ID" value="AT3G24550"/>
</dbReference>
<dbReference type="KEGG" id="ath:AT3G24550"/>
<dbReference type="Araport" id="AT3G24550"/>
<dbReference type="TAIR" id="AT3G24550">
    <property type="gene designation" value="PERK1"/>
</dbReference>
<dbReference type="eggNOG" id="KOG1187">
    <property type="taxonomic scope" value="Eukaryota"/>
</dbReference>
<dbReference type="HOGENOM" id="CLU_000288_106_6_1"/>
<dbReference type="InParanoid" id="Q9LV48"/>
<dbReference type="OMA" id="KCNDYPL"/>
<dbReference type="PhylomeDB" id="Q9LV48"/>
<dbReference type="CD-CODE" id="4299E36E">
    <property type="entry name" value="Nucleolus"/>
</dbReference>
<dbReference type="PRO" id="PR:Q9LV48"/>
<dbReference type="Proteomes" id="UP000006548">
    <property type="component" value="Chromosome 3"/>
</dbReference>
<dbReference type="ExpressionAtlas" id="Q9LV48">
    <property type="expression patterns" value="baseline and differential"/>
</dbReference>
<dbReference type="GO" id="GO:0005886">
    <property type="term" value="C:plasma membrane"/>
    <property type="evidence" value="ECO:0007005"/>
    <property type="project" value="TAIR"/>
</dbReference>
<dbReference type="GO" id="GO:0005524">
    <property type="term" value="F:ATP binding"/>
    <property type="evidence" value="ECO:0007669"/>
    <property type="project" value="UniProtKB-KW"/>
</dbReference>
<dbReference type="GO" id="GO:0004672">
    <property type="term" value="F:protein kinase activity"/>
    <property type="evidence" value="ECO:0000250"/>
    <property type="project" value="TAIR"/>
</dbReference>
<dbReference type="GO" id="GO:0106310">
    <property type="term" value="F:protein serine kinase activity"/>
    <property type="evidence" value="ECO:0007669"/>
    <property type="project" value="RHEA"/>
</dbReference>
<dbReference type="GO" id="GO:0004674">
    <property type="term" value="F:protein serine/threonine kinase activity"/>
    <property type="evidence" value="ECO:0007005"/>
    <property type="project" value="TAIR"/>
</dbReference>
<dbReference type="GO" id="GO:0046777">
    <property type="term" value="P:protein autophosphorylation"/>
    <property type="evidence" value="ECO:0007005"/>
    <property type="project" value="TAIR"/>
</dbReference>
<dbReference type="GO" id="GO:0009620">
    <property type="term" value="P:response to fungus"/>
    <property type="evidence" value="ECO:0000250"/>
    <property type="project" value="TAIR"/>
</dbReference>
<dbReference type="GO" id="GO:0009611">
    <property type="term" value="P:response to wounding"/>
    <property type="evidence" value="ECO:0000250"/>
    <property type="project" value="TAIR"/>
</dbReference>
<dbReference type="CDD" id="cd12087">
    <property type="entry name" value="TM_EGFR-like"/>
    <property type="match status" value="1"/>
</dbReference>
<dbReference type="FunFam" id="1.10.510.10:FF:000239">
    <property type="entry name" value="Proline-rich receptor-like protein kinase PERK1"/>
    <property type="match status" value="1"/>
</dbReference>
<dbReference type="FunFam" id="3.30.200.20:FF:000207">
    <property type="entry name" value="proline-rich receptor-like protein kinase PERK1"/>
    <property type="match status" value="1"/>
</dbReference>
<dbReference type="Gene3D" id="3.30.200.20">
    <property type="entry name" value="Phosphorylase Kinase, domain 1"/>
    <property type="match status" value="1"/>
</dbReference>
<dbReference type="Gene3D" id="1.10.510.10">
    <property type="entry name" value="Transferase(Phosphotransferase) domain 1"/>
    <property type="match status" value="1"/>
</dbReference>
<dbReference type="InterPro" id="IPR011009">
    <property type="entry name" value="Kinase-like_dom_sf"/>
</dbReference>
<dbReference type="InterPro" id="IPR047117">
    <property type="entry name" value="PERK1-13-like"/>
</dbReference>
<dbReference type="InterPro" id="IPR000719">
    <property type="entry name" value="Prot_kinase_dom"/>
</dbReference>
<dbReference type="InterPro" id="IPR017441">
    <property type="entry name" value="Protein_kinase_ATP_BS"/>
</dbReference>
<dbReference type="InterPro" id="IPR001245">
    <property type="entry name" value="Ser-Thr/Tyr_kinase_cat_dom"/>
</dbReference>
<dbReference type="InterPro" id="IPR008271">
    <property type="entry name" value="Ser/Thr_kinase_AS"/>
</dbReference>
<dbReference type="PANTHER" id="PTHR47982:SF35">
    <property type="entry name" value="PROLINE-RICH RECEPTOR-LIKE PROTEIN KINASE PERK1-RELATED"/>
    <property type="match status" value="1"/>
</dbReference>
<dbReference type="PANTHER" id="PTHR47982">
    <property type="entry name" value="PROLINE-RICH RECEPTOR-LIKE PROTEIN KINASE PERK4"/>
    <property type="match status" value="1"/>
</dbReference>
<dbReference type="Pfam" id="PF07714">
    <property type="entry name" value="PK_Tyr_Ser-Thr"/>
    <property type="match status" value="1"/>
</dbReference>
<dbReference type="SMART" id="SM00220">
    <property type="entry name" value="S_TKc"/>
    <property type="match status" value="1"/>
</dbReference>
<dbReference type="SUPFAM" id="SSF56112">
    <property type="entry name" value="Protein kinase-like (PK-like)"/>
    <property type="match status" value="1"/>
</dbReference>
<dbReference type="PROSITE" id="PS00107">
    <property type="entry name" value="PROTEIN_KINASE_ATP"/>
    <property type="match status" value="1"/>
</dbReference>
<dbReference type="PROSITE" id="PS50011">
    <property type="entry name" value="PROTEIN_KINASE_DOM"/>
    <property type="match status" value="1"/>
</dbReference>
<dbReference type="PROSITE" id="PS00108">
    <property type="entry name" value="PROTEIN_KINASE_ST"/>
    <property type="match status" value="1"/>
</dbReference>
<organism>
    <name type="scientific">Arabidopsis thaliana</name>
    <name type="common">Mouse-ear cress</name>
    <dbReference type="NCBI Taxonomy" id="3702"/>
    <lineage>
        <taxon>Eukaryota</taxon>
        <taxon>Viridiplantae</taxon>
        <taxon>Streptophyta</taxon>
        <taxon>Embryophyta</taxon>
        <taxon>Tracheophyta</taxon>
        <taxon>Spermatophyta</taxon>
        <taxon>Magnoliopsida</taxon>
        <taxon>eudicotyledons</taxon>
        <taxon>Gunneridae</taxon>
        <taxon>Pentapetalae</taxon>
        <taxon>rosids</taxon>
        <taxon>malvids</taxon>
        <taxon>Brassicales</taxon>
        <taxon>Brassicaceae</taxon>
        <taxon>Camelineae</taxon>
        <taxon>Arabidopsis</taxon>
    </lineage>
</organism>
<comment type="catalytic activity">
    <reaction>
        <text>L-seryl-[protein] + ATP = O-phospho-L-seryl-[protein] + ADP + H(+)</text>
        <dbReference type="Rhea" id="RHEA:17989"/>
        <dbReference type="Rhea" id="RHEA-COMP:9863"/>
        <dbReference type="Rhea" id="RHEA-COMP:11604"/>
        <dbReference type="ChEBI" id="CHEBI:15378"/>
        <dbReference type="ChEBI" id="CHEBI:29999"/>
        <dbReference type="ChEBI" id="CHEBI:30616"/>
        <dbReference type="ChEBI" id="CHEBI:83421"/>
        <dbReference type="ChEBI" id="CHEBI:456216"/>
        <dbReference type="EC" id="2.7.11.1"/>
    </reaction>
</comment>
<comment type="catalytic activity">
    <reaction>
        <text>L-threonyl-[protein] + ATP = O-phospho-L-threonyl-[protein] + ADP + H(+)</text>
        <dbReference type="Rhea" id="RHEA:46608"/>
        <dbReference type="Rhea" id="RHEA-COMP:11060"/>
        <dbReference type="Rhea" id="RHEA-COMP:11605"/>
        <dbReference type="ChEBI" id="CHEBI:15378"/>
        <dbReference type="ChEBI" id="CHEBI:30013"/>
        <dbReference type="ChEBI" id="CHEBI:30616"/>
        <dbReference type="ChEBI" id="CHEBI:61977"/>
        <dbReference type="ChEBI" id="CHEBI:456216"/>
        <dbReference type="EC" id="2.7.11.1"/>
    </reaction>
</comment>
<comment type="subcellular location">
    <subcellularLocation>
        <location evidence="9">Cell membrane</location>
        <topology evidence="9">Single-pass membrane protein</topology>
    </subcellularLocation>
</comment>
<comment type="alternative products">
    <event type="alternative splicing"/>
    <isoform>
        <id>Q9LV48-1</id>
        <name>1</name>
        <sequence type="displayed"/>
    </isoform>
    <isoform>
        <id>Q9LV48-2</id>
        <name>2</name>
        <sequence type="described" ref="VSP_039986"/>
    </isoform>
</comment>
<comment type="tissue specificity">
    <text evidence="6">Mostly expressed in inflorescence bolt, flower buds and siliques, and, to a lower extent, in roots, seedlings and leaves.</text>
</comment>
<comment type="similarity">
    <text evidence="3">Belongs to the protein kinase superfamily. Ser/Thr protein kinase family.</text>
</comment>
<evidence type="ECO:0000250" key="1">
    <source>
        <dbReference type="UniProtKB" id="O48814"/>
    </source>
</evidence>
<evidence type="ECO:0000255" key="2"/>
<evidence type="ECO:0000255" key="3">
    <source>
        <dbReference type="PROSITE-ProRule" id="PRU00159"/>
    </source>
</evidence>
<evidence type="ECO:0000255" key="4">
    <source>
        <dbReference type="PROSITE-ProRule" id="PRU10027"/>
    </source>
</evidence>
<evidence type="ECO:0000256" key="5">
    <source>
        <dbReference type="SAM" id="MobiDB-lite"/>
    </source>
</evidence>
<evidence type="ECO:0000269" key="6">
    <source>
    </source>
</evidence>
<evidence type="ECO:0000303" key="7">
    <source>
    </source>
</evidence>
<evidence type="ECO:0000305" key="8"/>
<evidence type="ECO:0000305" key="9">
    <source>
    </source>
</evidence>
<proteinExistence type="evidence at protein level"/>
<reference key="1">
    <citation type="journal article" date="2000" name="DNA Res.">
        <title>Structural analysis of Arabidopsis thaliana chromosome 3. II. Sequence features of the 4,251,695 bp regions covered by 90 P1, TAC and BAC clones.</title>
        <authorList>
            <person name="Kaneko T."/>
            <person name="Katoh T."/>
            <person name="Sato S."/>
            <person name="Nakamura Y."/>
            <person name="Asamizu E."/>
            <person name="Tabata S."/>
        </authorList>
    </citation>
    <scope>NUCLEOTIDE SEQUENCE [LARGE SCALE GENOMIC DNA]</scope>
    <source>
        <strain>cv. Columbia</strain>
    </source>
</reference>
<reference key="2">
    <citation type="journal article" date="2017" name="Plant J.">
        <title>Araport11: a complete reannotation of the Arabidopsis thaliana reference genome.</title>
        <authorList>
            <person name="Cheng C.Y."/>
            <person name="Krishnakumar V."/>
            <person name="Chan A.P."/>
            <person name="Thibaud-Nissen F."/>
            <person name="Schobel S."/>
            <person name="Town C.D."/>
        </authorList>
    </citation>
    <scope>GENOME REANNOTATION</scope>
    <source>
        <strain>cv. Columbia</strain>
    </source>
</reference>
<reference key="3">
    <citation type="journal article" date="2003" name="Science">
        <title>Empirical analysis of transcriptional activity in the Arabidopsis genome.</title>
        <authorList>
            <person name="Yamada K."/>
            <person name="Lim J."/>
            <person name="Dale J.M."/>
            <person name="Chen H."/>
            <person name="Shinn P."/>
            <person name="Palm C.J."/>
            <person name="Southwick A.M."/>
            <person name="Wu H.C."/>
            <person name="Kim C.J."/>
            <person name="Nguyen M."/>
            <person name="Pham P.K."/>
            <person name="Cheuk R.F."/>
            <person name="Karlin-Newmann G."/>
            <person name="Liu S.X."/>
            <person name="Lam B."/>
            <person name="Sakano H."/>
            <person name="Wu T."/>
            <person name="Yu G."/>
            <person name="Miranda M."/>
            <person name="Quach H.L."/>
            <person name="Tripp M."/>
            <person name="Chang C.H."/>
            <person name="Lee J.M."/>
            <person name="Toriumi M.J."/>
            <person name="Chan M.M."/>
            <person name="Tang C.C."/>
            <person name="Onodera C.S."/>
            <person name="Deng J.M."/>
            <person name="Akiyama K."/>
            <person name="Ansari Y."/>
            <person name="Arakawa T."/>
            <person name="Banh J."/>
            <person name="Banno F."/>
            <person name="Bowser L."/>
            <person name="Brooks S.Y."/>
            <person name="Carninci P."/>
            <person name="Chao Q."/>
            <person name="Choy N."/>
            <person name="Enju A."/>
            <person name="Goldsmith A.D."/>
            <person name="Gurjal M."/>
            <person name="Hansen N.F."/>
            <person name="Hayashizaki Y."/>
            <person name="Johnson-Hopson C."/>
            <person name="Hsuan V.W."/>
            <person name="Iida K."/>
            <person name="Karnes M."/>
            <person name="Khan S."/>
            <person name="Koesema E."/>
            <person name="Ishida J."/>
            <person name="Jiang P.X."/>
            <person name="Jones T."/>
            <person name="Kawai J."/>
            <person name="Kamiya A."/>
            <person name="Meyers C."/>
            <person name="Nakajima M."/>
            <person name="Narusaka M."/>
            <person name="Seki M."/>
            <person name="Sakurai T."/>
            <person name="Satou M."/>
            <person name="Tamse R."/>
            <person name="Vaysberg M."/>
            <person name="Wallender E.K."/>
            <person name="Wong C."/>
            <person name="Yamamura Y."/>
            <person name="Yuan S."/>
            <person name="Shinozaki K."/>
            <person name="Davis R.W."/>
            <person name="Theologis A."/>
            <person name="Ecker J.R."/>
        </authorList>
    </citation>
    <scope>NUCLEOTIDE SEQUENCE [LARGE SCALE MRNA] (ISOFORM 1)</scope>
    <source>
        <strain>cv. Columbia</strain>
    </source>
</reference>
<reference key="4">
    <citation type="journal article" date="2009" name="DNA Res.">
        <title>Analysis of multiple occurrences of alternative splicing events in Arabidopsis thaliana using novel sequenced full-length cDNAs.</title>
        <authorList>
            <person name="Iida K."/>
            <person name="Fukami-Kobayashi K."/>
            <person name="Toyoda A."/>
            <person name="Sakaki Y."/>
            <person name="Kobayashi M."/>
            <person name="Seki M."/>
            <person name="Shinozaki K."/>
        </authorList>
    </citation>
    <scope>NUCLEOTIDE SEQUENCE [LARGE SCALE MRNA] (ISOFORM 2)</scope>
    <source>
        <strain>cv. Columbia</strain>
        <tissue>Rosette leaf</tissue>
    </source>
</reference>
<reference key="5">
    <citation type="submission" date="2004-01" db="EMBL/GenBank/DDBJ databases">
        <title>Protein kinases in chloroplasts.</title>
        <authorList>
            <person name="Kurth J."/>
            <person name="Leister D."/>
        </authorList>
    </citation>
    <scope>NUCLEOTIDE SEQUENCE [MRNA] OF 8-224 AND 424-646 (ISOFORM 1)</scope>
    <source>
        <strain>cv. Columbia</strain>
    </source>
</reference>
<reference key="6">
    <citation type="journal article" date="2002" name="Plant Mol. Biol.">
        <title>The proline-rich, extensin-like receptor kinase-1 (PERK1) gene is rapidly induced by wounding.</title>
        <authorList>
            <person name="Silva N.F."/>
            <person name="Goring D.R."/>
        </authorList>
    </citation>
    <scope>GENE FAMILY</scope>
</reference>
<reference key="7">
    <citation type="journal article" date="2004" name="Plant Cell Physiol.">
        <title>A comprehensive expression analysis of the Arabidopsis proline-rich extensin-like receptor kinase gene family using bioinformatic and experimental approaches.</title>
        <authorList>
            <person name="Nakhamchik A."/>
            <person name="Zhao Z."/>
            <person name="Provart N.J."/>
            <person name="Shiu S.-H."/>
            <person name="Keatley S.K."/>
            <person name="Cameron R.K."/>
            <person name="Goring D.R."/>
        </authorList>
    </citation>
    <scope>TISSUE SPECIFICITY</scope>
    <scope>GENE FAMILY</scope>
    <scope>NOMENCLATURE</scope>
</reference>
<reference key="8">
    <citation type="journal article" date="2007" name="Mol. Cell. Proteomics">
        <title>A high content in lipid-modified peripheral proteins and integral receptor kinases features in the arabidopsis plasma membrane proteome.</title>
        <authorList>
            <person name="Marmagne A."/>
            <person name="Ferro M."/>
            <person name="Meinnel T."/>
            <person name="Bruley C."/>
            <person name="Kuhn L."/>
            <person name="Garin J."/>
            <person name="Barbier-Brygoo H."/>
            <person name="Ephritikhine G."/>
        </authorList>
    </citation>
    <scope>IDENTIFICATION BY MASS SPECTROMETRY</scope>
    <scope>SUBCELLULAR LOCATION [LARGE SCALE ANALYSIS]</scope>
</reference>
<feature type="chain" id="PRO_0000400053" description="Proline-rich receptor-like protein kinase PERK1">
    <location>
        <begin position="1"/>
        <end position="652"/>
    </location>
</feature>
<feature type="topological domain" description="Extracellular" evidence="2">
    <location>
        <begin position="1"/>
        <end position="139"/>
    </location>
</feature>
<feature type="transmembrane region" description="Helical" evidence="2">
    <location>
        <begin position="140"/>
        <end position="160"/>
    </location>
</feature>
<feature type="topological domain" description="Cytoplasmic" evidence="2">
    <location>
        <begin position="161"/>
        <end position="652"/>
    </location>
</feature>
<feature type="domain" description="Protein kinase" evidence="3">
    <location>
        <begin position="280"/>
        <end position="559"/>
    </location>
</feature>
<feature type="region of interest" description="Disordered" evidence="5">
    <location>
        <begin position="1"/>
        <end position="137"/>
    </location>
</feature>
<feature type="region of interest" description="Disordered" evidence="5">
    <location>
        <begin position="169"/>
        <end position="251"/>
    </location>
</feature>
<feature type="region of interest" description="Disordered" evidence="5">
    <location>
        <begin position="605"/>
        <end position="652"/>
    </location>
</feature>
<feature type="compositionally biased region" description="Pro residues" evidence="5">
    <location>
        <begin position="8"/>
        <end position="19"/>
    </location>
</feature>
<feature type="compositionally biased region" description="Pro residues" evidence="5">
    <location>
        <begin position="26"/>
        <end position="112"/>
    </location>
</feature>
<feature type="compositionally biased region" description="Low complexity" evidence="5">
    <location>
        <begin position="113"/>
        <end position="137"/>
    </location>
</feature>
<feature type="compositionally biased region" description="Polar residues" evidence="5">
    <location>
        <begin position="203"/>
        <end position="213"/>
    </location>
</feature>
<feature type="compositionally biased region" description="Pro residues" evidence="5">
    <location>
        <begin position="216"/>
        <end position="236"/>
    </location>
</feature>
<feature type="compositionally biased region" description="Polar residues" evidence="5">
    <location>
        <begin position="605"/>
        <end position="616"/>
    </location>
</feature>
<feature type="active site" description="Proton acceptor" evidence="3 4">
    <location>
        <position position="404"/>
    </location>
</feature>
<feature type="binding site" evidence="3">
    <location>
        <begin position="286"/>
        <end position="294"/>
    </location>
    <ligand>
        <name>ATP</name>
        <dbReference type="ChEBI" id="CHEBI:30616"/>
    </ligand>
</feature>
<feature type="binding site" evidence="3">
    <location>
        <position position="308"/>
    </location>
    <ligand>
        <name>ATP</name>
        <dbReference type="ChEBI" id="CHEBI:30616"/>
    </ligand>
</feature>
<feature type="modified residue" description="Phosphothreonine" evidence="1">
    <location>
        <position position="269"/>
    </location>
</feature>
<feature type="modified residue" description="Phosphotyrosine" evidence="1">
    <location>
        <position position="353"/>
    </location>
</feature>
<feature type="modified residue" description="Phosphoserine" evidence="1">
    <location>
        <position position="408"/>
    </location>
</feature>
<feature type="modified residue" description="Phosphoserine" evidence="1">
    <location>
        <position position="437"/>
    </location>
</feature>
<feature type="modified residue" description="Phosphothreonine" evidence="1">
    <location>
        <position position="438"/>
    </location>
</feature>
<feature type="modified residue" description="Phosphothreonine" evidence="1">
    <location>
        <position position="443"/>
    </location>
</feature>
<feature type="modified residue" description="Phosphotyrosine" evidence="1">
    <location>
        <position position="451"/>
    </location>
</feature>
<feature type="glycosylation site" description="N-linked (GlcNAc...) asparagine" evidence="2">
    <location>
        <position position="21"/>
    </location>
</feature>
<feature type="glycosylation site" description="N-linked (GlcNAc...) asparagine" evidence="2">
    <location>
        <position position="50"/>
    </location>
</feature>
<feature type="splice variant" id="VSP_039986" description="In isoform 2." evidence="7">
    <location>
        <begin position="18"/>
        <end position="54"/>
    </location>
</feature>
<feature type="sequence conflict" description="In Ref. 3; AAK43886/AAP37768." evidence="8" ref="3">
    <original>L</original>
    <variation>I</variation>
    <location>
        <position position="77"/>
    </location>
</feature>
<gene>
    <name type="primary">PERK1</name>
    <name type="ordered locus">At3g24550</name>
    <name type="ORF">MOB24.13</name>
</gene>